<evidence type="ECO:0000250" key="1">
    <source>
        <dbReference type="UniProtKB" id="A1A5V7"/>
    </source>
</evidence>
<evidence type="ECO:0000250" key="2">
    <source>
        <dbReference type="UniProtKB" id="Q5BJD5"/>
    </source>
</evidence>
<evidence type="ECO:0000255" key="3"/>
<evidence type="ECO:0000256" key="4">
    <source>
        <dbReference type="SAM" id="MobiDB-lite"/>
    </source>
</evidence>
<evidence type="ECO:0000305" key="5"/>
<keyword id="KW-0072">Autophagy</keyword>
<keyword id="KW-0256">Endoplasmic reticulum</keyword>
<keyword id="KW-0445">Lipid transport</keyword>
<keyword id="KW-0472">Membrane</keyword>
<keyword id="KW-0524">Neurogenesis</keyword>
<keyword id="KW-0597">Phosphoprotein</keyword>
<keyword id="KW-1185">Reference proteome</keyword>
<keyword id="KW-0812">Transmembrane</keyword>
<keyword id="KW-1133">Transmembrane helix</keyword>
<keyword id="KW-0813">Transport</keyword>
<dbReference type="EMBL" id="CR858484">
    <property type="protein sequence ID" value="CAH90712.1"/>
    <property type="molecule type" value="mRNA"/>
</dbReference>
<dbReference type="RefSeq" id="NP_001125395.1">
    <property type="nucleotide sequence ID" value="NM_001131923.1"/>
</dbReference>
<dbReference type="SMR" id="Q5RBZ8"/>
<dbReference type="FunCoup" id="Q5RBZ8">
    <property type="interactions" value="1163"/>
</dbReference>
<dbReference type="STRING" id="9601.ENSPPYP00000022362"/>
<dbReference type="GeneID" id="100172300"/>
<dbReference type="KEGG" id="pon:100172300"/>
<dbReference type="CTD" id="440026"/>
<dbReference type="eggNOG" id="KOG3140">
    <property type="taxonomic scope" value="Eukaryota"/>
</dbReference>
<dbReference type="InParanoid" id="Q5RBZ8"/>
<dbReference type="OrthoDB" id="3364966at2759"/>
<dbReference type="Proteomes" id="UP000001595">
    <property type="component" value="Unplaced"/>
</dbReference>
<dbReference type="GO" id="GO:0005789">
    <property type="term" value="C:endoplasmic reticulum membrane"/>
    <property type="evidence" value="ECO:0000250"/>
    <property type="project" value="UniProtKB"/>
</dbReference>
<dbReference type="GO" id="GO:0044233">
    <property type="term" value="C:mitochondria-associated endoplasmic reticulum membrane contact site"/>
    <property type="evidence" value="ECO:0000250"/>
    <property type="project" value="UniProtKB"/>
</dbReference>
<dbReference type="GO" id="GO:0017128">
    <property type="term" value="F:phospholipid scramblase activity"/>
    <property type="evidence" value="ECO:0000250"/>
    <property type="project" value="UniProtKB"/>
</dbReference>
<dbReference type="GO" id="GO:0000045">
    <property type="term" value="P:autophagosome assembly"/>
    <property type="evidence" value="ECO:0000250"/>
    <property type="project" value="UniProtKB"/>
</dbReference>
<dbReference type="GO" id="GO:0007399">
    <property type="term" value="P:nervous system development"/>
    <property type="evidence" value="ECO:0007669"/>
    <property type="project" value="UniProtKB-KW"/>
</dbReference>
<dbReference type="InterPro" id="IPR045014">
    <property type="entry name" value="TM41A/B"/>
</dbReference>
<dbReference type="InterPro" id="IPR032816">
    <property type="entry name" value="VTT_dom"/>
</dbReference>
<dbReference type="PANTHER" id="PTHR43220">
    <property type="match status" value="1"/>
</dbReference>
<dbReference type="PANTHER" id="PTHR43220:SF18">
    <property type="entry name" value="TRANSMEMBRANE PROTEIN 41B"/>
    <property type="match status" value="1"/>
</dbReference>
<dbReference type="Pfam" id="PF09335">
    <property type="entry name" value="VTT_dom"/>
    <property type="match status" value="1"/>
</dbReference>
<accession>Q5RBZ8</accession>
<proteinExistence type="evidence at transcript level"/>
<sequence length="291" mass="32449">MAKGRVAERSQMGADHTTPVGDGAAGTRGPAAPGSRDYQKEKSWAEAGSARMSLLILVSIFLSAAFVMFLVYKNFPQLSEEERVNMKVPRDMDDAKALGKVLSKYKDTFYVQVLVAYFATYIFLQTFAIPGSIFLSILSGFLYPFPLALFLVCLCSGLGASFCYMLSYLVGRPVVYKYLTEKAVKWSQQVERHREHLINYIIFLRITPFLPNWFINITSPVINVPLKVFFIGTFLGVAPPSFVAIKAGTTLHQPTTAGEAVSWNSIFILMILAVLSILPAIFQKKLKQKFE</sequence>
<feature type="chain" id="PRO_0000291939" description="Transmembrane protein 41B">
    <location>
        <begin position="1"/>
        <end position="291"/>
    </location>
</feature>
<feature type="transmembrane region" description="Helical" evidence="3">
    <location>
        <begin position="52"/>
        <end position="72"/>
    </location>
</feature>
<feature type="transmembrane region" description="Helical" evidence="3">
    <location>
        <begin position="109"/>
        <end position="129"/>
    </location>
</feature>
<feature type="transmembrane region" description="Helical" evidence="3">
    <location>
        <begin position="147"/>
        <end position="169"/>
    </location>
</feature>
<feature type="transmembrane region" description="Helical" evidence="3">
    <location>
        <begin position="197"/>
        <end position="217"/>
    </location>
</feature>
<feature type="transmembrane region" description="Helical" evidence="3">
    <location>
        <begin position="225"/>
        <end position="245"/>
    </location>
</feature>
<feature type="transmembrane region" description="Helical" evidence="3">
    <location>
        <begin position="262"/>
        <end position="282"/>
    </location>
</feature>
<feature type="region of interest" description="Disordered" evidence="4">
    <location>
        <begin position="1"/>
        <end position="38"/>
    </location>
</feature>
<feature type="region of interest" description="VTT domain; required for its function in autophagy" evidence="2">
    <location>
        <begin position="140"/>
        <end position="251"/>
    </location>
</feature>
<feature type="compositionally biased region" description="Low complexity" evidence="4">
    <location>
        <begin position="21"/>
        <end position="34"/>
    </location>
</feature>
<feature type="modified residue" description="Phosphothreonine" evidence="2">
    <location>
        <position position="18"/>
    </location>
</feature>
<feature type="modified residue" description="Phosphoserine" evidence="2">
    <location>
        <position position="35"/>
    </location>
</feature>
<gene>
    <name evidence="2" type="primary">TMEM41B</name>
</gene>
<comment type="function">
    <text evidence="1 2">Phospholipid scramblase involved in lipid homeostasis and membrane dynamics processes. Has phospholipid scramblase activity toward cholesterol and phosphatidylserine, as well as phosphatidylethanolamine and phosphatidylcholine. Required for autophagosome formation: participates in early stages of autophagosome biogenesis at the endoplasmic reticulum (ER) membrane by reequilibrating the leaflets of the ER as lipids are extracted by ATG2 (ATG2A or ATG2B) to mediate autophagosome assembly. In addition to autophagy, involved in other processes in which phospholipid scramblase activity is required (By similarity). Required for normal motor neuron development (By similarity).</text>
</comment>
<comment type="catalytic activity">
    <reaction evidence="2">
        <text>a 1,2-diacyl-sn-glycero-3-phospho-L-serine(in) = a 1,2-diacyl-sn-glycero-3-phospho-L-serine(out)</text>
        <dbReference type="Rhea" id="RHEA:38663"/>
        <dbReference type="ChEBI" id="CHEBI:57262"/>
    </reaction>
</comment>
<comment type="catalytic activity">
    <reaction evidence="2">
        <text>cholesterol(in) = cholesterol(out)</text>
        <dbReference type="Rhea" id="RHEA:39747"/>
        <dbReference type="ChEBI" id="CHEBI:16113"/>
    </reaction>
</comment>
<comment type="catalytic activity">
    <reaction evidence="2">
        <text>a 1,2-diacyl-sn-glycero-3-phosphocholine(in) = a 1,2-diacyl-sn-glycero-3-phosphocholine(out)</text>
        <dbReference type="Rhea" id="RHEA:38571"/>
        <dbReference type="ChEBI" id="CHEBI:57643"/>
    </reaction>
</comment>
<comment type="catalytic activity">
    <reaction evidence="2">
        <text>a 1,2-diacyl-sn-glycero-3-phosphoethanolamine(in) = a 1,2-diacyl-sn-glycero-3-phosphoethanolamine(out)</text>
        <dbReference type="Rhea" id="RHEA:38895"/>
        <dbReference type="ChEBI" id="CHEBI:64612"/>
    </reaction>
</comment>
<comment type="subunit">
    <text evidence="2">Interacts with VMP1. Interacts with COPA, COPB1, VDAC1 and ERLIN2. Interacts with ATG2A. Interacts with SURF4.</text>
</comment>
<comment type="subcellular location">
    <subcellularLocation>
        <location evidence="2">Endoplasmic reticulum membrane</location>
        <topology evidence="3">Multi-pass membrane protein</topology>
    </subcellularLocation>
    <subcellularLocation>
        <location evidence="2">Endomembrane system</location>
    </subcellularLocation>
    <text evidence="2">Localized to specific membrane structures termed mitochondria-associated membranes (MAMs) which connect the endoplasmic reticulum (ER) and the mitochondria.</text>
</comment>
<comment type="domain">
    <text evidence="2">The VTT domain was previously called the SNARE-assoc domain. As there is no evidence that this domain associates with SNARE proteins, it was renamed as VMP1, TMEM41, and TVP38 (VTT) domain.</text>
</comment>
<comment type="similarity">
    <text evidence="5">Belongs to the TMEM41 family.</text>
</comment>
<protein>
    <recommendedName>
        <fullName evidence="5">Transmembrane protein 41B</fullName>
    </recommendedName>
</protein>
<organism>
    <name type="scientific">Pongo abelii</name>
    <name type="common">Sumatran orangutan</name>
    <name type="synonym">Pongo pygmaeus abelii</name>
    <dbReference type="NCBI Taxonomy" id="9601"/>
    <lineage>
        <taxon>Eukaryota</taxon>
        <taxon>Metazoa</taxon>
        <taxon>Chordata</taxon>
        <taxon>Craniata</taxon>
        <taxon>Vertebrata</taxon>
        <taxon>Euteleostomi</taxon>
        <taxon>Mammalia</taxon>
        <taxon>Eutheria</taxon>
        <taxon>Euarchontoglires</taxon>
        <taxon>Primates</taxon>
        <taxon>Haplorrhini</taxon>
        <taxon>Catarrhini</taxon>
        <taxon>Hominidae</taxon>
        <taxon>Pongo</taxon>
    </lineage>
</organism>
<name>TM41B_PONAB</name>
<reference key="1">
    <citation type="submission" date="2004-11" db="EMBL/GenBank/DDBJ databases">
        <authorList>
            <consortium name="The German cDNA consortium"/>
        </authorList>
    </citation>
    <scope>NUCLEOTIDE SEQUENCE [LARGE SCALE MRNA]</scope>
    <source>
        <tissue>Brain cortex</tissue>
    </source>
</reference>